<comment type="function">
    <text evidence="3 4 5 7 9">3-keto-steroid reductase; part of the third module of ergosterol biosynthesis pathway that includes the late steps of the pathway (PubMed:10535978, PubMed:12119386, PubMed:12842197, PubMed:15995173). ERG27 is a catalytic component of the C-4 demethylation complex that catalyze the reduction of the keto group on the C-3 (PubMed:10535978). The third module or late pathway involves the ergosterol synthesis itself through consecutive reactions that mainly occur in the endoplasmic reticulum (ER) membrane. Firstly, the squalene synthase ERG9 catalyzes the condensation of 2 farnesyl pyrophosphate moieties to form squalene, which is the precursor of all steroids. Squalene synthase is crucial for balancing the incorporation of farnesyl diphosphate (FPP) into sterol and nonsterol isoprene synthesis. Secondly, the squalene epoxidase ERG1 catalyzes the stereospecific oxidation of squalene to (S)-2,3-epoxysqualene, which is considered to be a rate-limiting enzyme in steroid biosynthesis. Then, the lanosterol synthase ERG7 catalyzes the cyclization of (S)-2,3 oxidosqualene to lanosterol, a reaction that forms the sterol core. In the next steps, lanosterol is transformed to zymosterol through a complex process involving various demethylation, reduction and desaturation reactions. The lanosterol 14-alpha-demethylase ERG11 (also known as CYP51) catalyzes C14-demethylation of lanosterol to produce 4,4'-dimethyl cholesta-8,14,24-triene-3-beta-ol, which is critical for ergosterol biosynthesis. The C-14 reductase ERG24 reduces the C14=C15 double bond of 4,4-dimethyl-cholesta-8,14,24-trienol to produce 4,4-dimethyl-cholesta-8,24-dienol. 4,4-dimethyl-cholesta-8,24-dienol is substrate of the C-4 demethylation complex ERG25-ERG26-ERG27 in which ERG25 catalyzes the three-step monooxygenation required for the demethylation of 4,4-dimethyl and 4alpha-methylsterols, ERG26 catalyzes the oxidative decarboxylation that results in a reduction of the 3-beta-hydroxy group at the C-3 carbon to an oxo group, and ERG27 is responsible for the reduction of the keto group on the C-3. ERG28 has a role as a scaffold to help anchor ERG25, ERG26 and ERG27 to the endoplasmic reticulum and ERG29 regulates the activity of the iron-containing C4-methylsterol oxidase ERG25. Then, the sterol 24-C-methyltransferase ERG6 catalyzes the methyl transfer from S-adenosyl-methionine to the C-24 of zymosterol to form fecosterol. The C-8 sterol isomerase ERG2 catalyzes the reaction which results in unsaturation at C-7 in the B ring of sterols and thus converts fecosterol to episterol. The sterol-C5-desaturase ERG3 then catalyzes the introduction of a C-5 double bond in the B ring to produce 5-dehydroepisterol. The C-22 sterol desaturase ERG5 further converts 5-dehydroepisterol into ergosta-5,7,22,24(28)-tetraen-3beta-ol by forming the C-22(23) double bond in the sterol side chain. Finally, ergosta-5,7,22,24(28)-tetraen-3beta-ol is substrate of the C-24(28) sterol reductase ERG4 to produce ergosterol (PubMed:32679672).</text>
</comment>
<comment type="function">
    <text evidence="5">Facilitates the association of ERG7 with lipid particles preventing its digestion in the endoplasmic reticulum and the lipid particles.</text>
</comment>
<comment type="catalytic activity">
    <reaction evidence="3">
        <text>3-dehydro-4alpha-methylzymosterol + NADPH + H(+) = 4alpha-methylzymosterol + NADP(+)</text>
        <dbReference type="Rhea" id="RHEA:36379"/>
        <dbReference type="ChEBI" id="CHEBI:1949"/>
        <dbReference type="ChEBI" id="CHEBI:15378"/>
        <dbReference type="ChEBI" id="CHEBI:57783"/>
        <dbReference type="ChEBI" id="CHEBI:58349"/>
        <dbReference type="ChEBI" id="CHEBI:136486"/>
        <dbReference type="EC" id="1.1.1.270"/>
    </reaction>
    <physiologicalReaction direction="left-to-right" evidence="3">
        <dbReference type="Rhea" id="RHEA:36380"/>
    </physiologicalReaction>
</comment>
<comment type="pathway">
    <text evidence="3">Steroid biosynthesis; zymosterol biosynthesis; zymosterol from lanosterol: step 5/6.</text>
</comment>
<comment type="subunit">
    <text evidence="4 5 7">Heterotetramer of ERG25, ERG26, ERG27 and ERG28. ERG28 acts as a scaffold to tether ERG27 and other 4,4-demethylation-related enzymes, forming a demethylation enzyme complex, in the endoplasmic reticulum. Interacts with ERG25 and ERG28. Also interacts with ERG7, but only in lipid particles.</text>
</comment>
<comment type="interaction">
    <interactant intactId="EBI-38132">
        <id>Q12452</id>
    </interactant>
    <interactant intactId="EBI-6506">
        <id>P53045</id>
        <label>ERG25</label>
    </interactant>
    <organismsDiffer>false</organismsDiffer>
    <experiments>4</experiments>
</comment>
<comment type="interaction">
    <interactant intactId="EBI-38132">
        <id>Q12452</id>
    </interactant>
    <interactant intactId="EBI-22518">
        <id>P40030</id>
        <label>ERG28</label>
    </interactant>
    <organismsDiffer>false</organismsDiffer>
    <experiments>6</experiments>
</comment>
<comment type="interaction">
    <interactant intactId="EBI-38132">
        <id>Q12452</id>
    </interactant>
    <interactant intactId="EBI-6572">
        <id>P38604</id>
        <label>ERG7</label>
    </interactant>
    <organismsDiffer>false</organismsDiffer>
    <experiments>5</experiments>
</comment>
<comment type="subcellular location">
    <subcellularLocation>
        <location evidence="4 5 6">Endoplasmic reticulum membrane</location>
        <topology evidence="4 5 6">Peripheral membrane protein</topology>
    </subcellularLocation>
    <subcellularLocation>
        <location evidence="4 5 6">Lipid droplet</location>
    </subcellularLocation>
</comment>
<comment type="similarity">
    <text evidence="10">Belongs to the short-chain dehydrogenases/reductases (SDR) family. ERG27 subfamily.</text>
</comment>
<sequence>MNRKVAIVTGTNSNLGLNIVFRLIETEDTNVRLTIVVTSRTLPRVQEVINQIKDFYNKSGRVEDLEIDFDYLLVDFTNMVSVLNAYYDINKKYRAINYLFVNAAQGIFDGIDWIGAVKEVFTNPLEAVTNPTYKIQLVGVKSKDDMGLIFQANVFGPYYFISKILPQLTRGKAYIVWISSIMSDPKYLSLNDIELLKTNASYEGSKRLVDLLHLATYKDLKKLGINQYVVQPGIFTSHSFSEYLNFFTYFGMLCLFYLARLLGSPWHNIDGYKAANAPVYVTRLANPNFEKQDVKYGSATSRDGMPYIKTQEIDPTGMSDVFAYIQKKKLEWDEKLKDQIVETRTPI</sequence>
<protein>
    <recommendedName>
        <fullName evidence="8">3-keto-steroid reductase ERG27</fullName>
        <ecNumber evidence="3">1.1.1.270</ecNumber>
    </recommendedName>
    <alternativeName>
        <fullName evidence="8">Ergosterol biosynthetic protein 27</fullName>
    </alternativeName>
</protein>
<name>ERG27_YEAST</name>
<reference key="1">
    <citation type="journal article" date="1997" name="Nature">
        <title>The nucleotide sequence of Saccharomyces cerevisiae chromosome XII.</title>
        <authorList>
            <person name="Johnston M."/>
            <person name="Hillier L.W."/>
            <person name="Riles L."/>
            <person name="Albermann K."/>
            <person name="Andre B."/>
            <person name="Ansorge W."/>
            <person name="Benes V."/>
            <person name="Brueckner M."/>
            <person name="Delius H."/>
            <person name="Dubois E."/>
            <person name="Duesterhoeft A."/>
            <person name="Entian K.-D."/>
            <person name="Floeth M."/>
            <person name="Goffeau A."/>
            <person name="Hebling U."/>
            <person name="Heumann K."/>
            <person name="Heuss-Neitzel D."/>
            <person name="Hilbert H."/>
            <person name="Hilger F."/>
            <person name="Kleine K."/>
            <person name="Koetter P."/>
            <person name="Louis E.J."/>
            <person name="Messenguy F."/>
            <person name="Mewes H.-W."/>
            <person name="Miosga T."/>
            <person name="Moestl D."/>
            <person name="Mueller-Auer S."/>
            <person name="Nentwich U."/>
            <person name="Obermaier B."/>
            <person name="Piravandi E."/>
            <person name="Pohl T.M."/>
            <person name="Portetelle D."/>
            <person name="Purnelle B."/>
            <person name="Rechmann S."/>
            <person name="Rieger M."/>
            <person name="Rinke M."/>
            <person name="Rose M."/>
            <person name="Scharfe M."/>
            <person name="Scherens B."/>
            <person name="Scholler P."/>
            <person name="Schwager C."/>
            <person name="Schwarz S."/>
            <person name="Underwood A.P."/>
            <person name="Urrestarazu L.A."/>
            <person name="Vandenbol M."/>
            <person name="Verhasselt P."/>
            <person name="Vierendeels F."/>
            <person name="Voet M."/>
            <person name="Volckaert G."/>
            <person name="Voss H."/>
            <person name="Wambutt R."/>
            <person name="Wedler E."/>
            <person name="Wedler H."/>
            <person name="Zimmermann F.K."/>
            <person name="Zollner A."/>
            <person name="Hani J."/>
            <person name="Hoheisel J.D."/>
        </authorList>
    </citation>
    <scope>NUCLEOTIDE SEQUENCE [LARGE SCALE GENOMIC DNA]</scope>
    <source>
        <strain>ATCC 204508 / S288c</strain>
    </source>
</reference>
<reference key="2">
    <citation type="journal article" date="2014" name="G3 (Bethesda)">
        <title>The reference genome sequence of Saccharomyces cerevisiae: Then and now.</title>
        <authorList>
            <person name="Engel S.R."/>
            <person name="Dietrich F.S."/>
            <person name="Fisk D.G."/>
            <person name="Binkley G."/>
            <person name="Balakrishnan R."/>
            <person name="Costanzo M.C."/>
            <person name="Dwight S.S."/>
            <person name="Hitz B.C."/>
            <person name="Karra K."/>
            <person name="Nash R.S."/>
            <person name="Weng S."/>
            <person name="Wong E.D."/>
            <person name="Lloyd P."/>
            <person name="Skrzypek M.S."/>
            <person name="Miyasato S.R."/>
            <person name="Simison M."/>
            <person name="Cherry J.M."/>
        </authorList>
    </citation>
    <scope>GENOME REANNOTATION</scope>
    <source>
        <strain>ATCC 204508 / S288c</strain>
    </source>
</reference>
<reference key="3">
    <citation type="journal article" date="1999" name="Proc. Natl. Acad. Sci. U.S.A.">
        <title>Characterization of the Saccharomyces cerevisiae ERG27 gene encoding the 3-keto reductase involved in C-4 sterol demethylation.</title>
        <authorList>
            <person name="Gachotte D."/>
            <person name="Sen S.E."/>
            <person name="Eckstein J."/>
            <person name="Barbuch R."/>
            <person name="Krieger M."/>
            <person name="Ray B.D."/>
            <person name="Bard M."/>
        </authorList>
    </citation>
    <scope>FUNCTION</scope>
    <scope>CATALYTIC ACTIVITY</scope>
    <scope>PATHWAY</scope>
</reference>
<reference key="4">
    <citation type="journal article" date="2002" name="Proc. Natl. Acad. Sci. U.S.A.">
        <title>Protein-protein interactions among C-4 demethylation enzymes involved in yeast sterol biosynthesis.</title>
        <authorList>
            <person name="Mo C."/>
            <person name="Valachovic M."/>
            <person name="Randall S.K."/>
            <person name="Nickels J.T."/>
            <person name="Bard M."/>
        </authorList>
    </citation>
    <scope>FUNCTION</scope>
    <scope>SUBUNIT</scope>
    <scope>INTERACTION WITH ERG25 AND ERG28</scope>
    <scope>SUBCELLULAR LOCATION</scope>
</reference>
<reference key="5">
    <citation type="journal article" date="2003" name="Biochim. Biophys. Acta">
        <title>In yeast sterol biosynthesis the 3-keto reductase protein (Erg27p) is required for oxidosqualene cyclase (Erg7p) activity.</title>
        <authorList>
            <person name="Mo C."/>
            <person name="Milla P."/>
            <person name="Athenstaedt K."/>
            <person name="Ott R."/>
            <person name="Balliano G."/>
            <person name="Daum G."/>
            <person name="Bard M."/>
        </authorList>
    </citation>
    <scope>FUNCTION</scope>
    <scope>INTERACTION WITH ERG7</scope>
    <scope>SUBCELLULAR LOCATION</scope>
</reference>
<reference key="6">
    <citation type="journal article" date="2005" name="J. Lipid Res.">
        <title>Erg28p is a key protein in the yeast sterol biosynthetic enzyme complex.</title>
        <authorList>
            <person name="Mo C."/>
            <person name="Bard M."/>
        </authorList>
    </citation>
    <scope>FUNCTION</scope>
    <scope>INTERACTION WITH ERG28</scope>
</reference>
<reference key="7">
    <citation type="journal article" date="2005" name="Mol. Cell. Proteomics">
        <title>The spatial organization of lipid synthesis in the yeast Saccharomyces cerevisiae derived from large scale green fluorescent protein tagging and high resolution microscopy.</title>
        <authorList>
            <person name="Natter K."/>
            <person name="Leitner P."/>
            <person name="Faschinger A."/>
            <person name="Wolinski H."/>
            <person name="McCraith S."/>
            <person name="Fields S."/>
            <person name="Kohlwein S.D."/>
        </authorList>
    </citation>
    <scope>SUBCELLULAR LOCATION</scope>
</reference>
<reference key="8">
    <citation type="journal article" date="2007" name="J. Proteome Res.">
        <title>Large-scale phosphorylation analysis of alpha-factor-arrested Saccharomyces cerevisiae.</title>
        <authorList>
            <person name="Li X."/>
            <person name="Gerber S.A."/>
            <person name="Rudner A.D."/>
            <person name="Beausoleil S.A."/>
            <person name="Haas W."/>
            <person name="Villen J."/>
            <person name="Elias J.E."/>
            <person name="Gygi S.P."/>
        </authorList>
    </citation>
    <scope>PHOSPHORYLATION [LARGE SCALE ANALYSIS] AT THR-345</scope>
    <scope>IDENTIFICATION BY MASS SPECTROMETRY [LARGE SCALE ANALYSIS]</scope>
    <source>
        <strain>ADR376</strain>
    </source>
</reference>
<reference key="9">
    <citation type="journal article" date="2020" name="Genes (Basel)">
        <title>Regulation of ergosterol biosynthesis in Saccharomyces cerevisiae.</title>
        <authorList>
            <person name="Jorda T."/>
            <person name="Puig S."/>
        </authorList>
    </citation>
    <scope>REVIEW ON ERGOSTEROL BIOSYNTHESIS</scope>
</reference>
<feature type="chain" id="PRO_0000054595" description="3-keto-steroid reductase ERG27">
    <location>
        <begin position="1"/>
        <end position="347"/>
    </location>
</feature>
<feature type="active site" description="Proton donor" evidence="2">
    <location>
        <position position="179"/>
    </location>
</feature>
<feature type="active site" description="Proton donor" evidence="2">
    <location>
        <position position="202"/>
    </location>
</feature>
<feature type="active site" description="Lowers pKa of active site Tyr" evidence="2">
    <location>
        <position position="206"/>
    </location>
</feature>
<feature type="binding site" evidence="1">
    <location>
        <position position="15"/>
    </location>
    <ligand>
        <name>NADP(+)</name>
        <dbReference type="ChEBI" id="CHEBI:58349"/>
    </ligand>
</feature>
<feature type="binding site" evidence="1">
    <location>
        <position position="38"/>
    </location>
    <ligand>
        <name>NADP(+)</name>
        <dbReference type="ChEBI" id="CHEBI:58349"/>
    </ligand>
</feature>
<feature type="binding site" evidence="1">
    <location>
        <position position="44"/>
    </location>
    <ligand>
        <name>NADP(+)</name>
        <dbReference type="ChEBI" id="CHEBI:58349"/>
    </ligand>
</feature>
<feature type="binding site" evidence="2">
    <location>
        <position position="202"/>
    </location>
    <ligand>
        <name>NADP(+)</name>
        <dbReference type="ChEBI" id="CHEBI:58349"/>
    </ligand>
</feature>
<feature type="binding site" evidence="2">
    <location>
        <position position="206"/>
    </location>
    <ligand>
        <name>NADP(+)</name>
        <dbReference type="ChEBI" id="CHEBI:58349"/>
    </ligand>
</feature>
<feature type="binding site" evidence="1">
    <location>
        <position position="237"/>
    </location>
    <ligand>
        <name>NADP(+)</name>
        <dbReference type="ChEBI" id="CHEBI:58349"/>
    </ligand>
</feature>
<feature type="modified residue" description="Phosphothreonine" evidence="11">
    <location>
        <position position="345"/>
    </location>
</feature>
<dbReference type="EC" id="1.1.1.270" evidence="3"/>
<dbReference type="EMBL" id="U53876">
    <property type="protein sequence ID" value="AAB67544.1"/>
    <property type="molecule type" value="Genomic_DNA"/>
</dbReference>
<dbReference type="EMBL" id="Z73272">
    <property type="protein sequence ID" value="CAA97664.1"/>
    <property type="molecule type" value="Genomic_DNA"/>
</dbReference>
<dbReference type="EMBL" id="BK006945">
    <property type="protein sequence ID" value="DAA09417.1"/>
    <property type="molecule type" value="Genomic_DNA"/>
</dbReference>
<dbReference type="PIR" id="S64936">
    <property type="entry name" value="S64936"/>
</dbReference>
<dbReference type="RefSeq" id="NP_013201.1">
    <property type="nucleotide sequence ID" value="NM_001181987.1"/>
</dbReference>
<dbReference type="SMR" id="Q12452"/>
<dbReference type="BioGRID" id="31374">
    <property type="interactions" value="337"/>
</dbReference>
<dbReference type="DIP" id="DIP-1237N"/>
<dbReference type="FunCoup" id="Q12452">
    <property type="interactions" value="196"/>
</dbReference>
<dbReference type="IntAct" id="Q12452">
    <property type="interactions" value="23"/>
</dbReference>
<dbReference type="MINT" id="Q12452"/>
<dbReference type="STRING" id="4932.YLR100W"/>
<dbReference type="iPTMnet" id="Q12452"/>
<dbReference type="PaxDb" id="4932-YLR100W"/>
<dbReference type="PeptideAtlas" id="Q12452"/>
<dbReference type="TopDownProteomics" id="Q12452"/>
<dbReference type="EnsemblFungi" id="YLR100W_mRNA">
    <property type="protein sequence ID" value="YLR100W"/>
    <property type="gene ID" value="YLR100W"/>
</dbReference>
<dbReference type="GeneID" id="850790"/>
<dbReference type="KEGG" id="sce:YLR100W"/>
<dbReference type="AGR" id="SGD:S000004090"/>
<dbReference type="SGD" id="S000004090">
    <property type="gene designation" value="ERG27"/>
</dbReference>
<dbReference type="VEuPathDB" id="FungiDB:YLR100W"/>
<dbReference type="eggNOG" id="KOG1478">
    <property type="taxonomic scope" value="Eukaryota"/>
</dbReference>
<dbReference type="GeneTree" id="ENSGT00390000013340"/>
<dbReference type="HOGENOM" id="CLU_029944_1_0_1"/>
<dbReference type="InParanoid" id="Q12452"/>
<dbReference type="OMA" id="WHNIDGY"/>
<dbReference type="OrthoDB" id="9989144at2759"/>
<dbReference type="BioCyc" id="MetaCyc:YLR100W-MONOMER"/>
<dbReference type="BioCyc" id="YEAST:YLR100W-MONOMER"/>
<dbReference type="BRENDA" id="1.1.1.270">
    <property type="organism ID" value="984"/>
</dbReference>
<dbReference type="UniPathway" id="UPA00770">
    <property type="reaction ID" value="UER00758"/>
</dbReference>
<dbReference type="BioGRID-ORCS" id="850790">
    <property type="hits" value="5 hits in 10 CRISPR screens"/>
</dbReference>
<dbReference type="PRO" id="PR:Q12452"/>
<dbReference type="Proteomes" id="UP000002311">
    <property type="component" value="Chromosome XII"/>
</dbReference>
<dbReference type="RNAct" id="Q12452">
    <property type="molecule type" value="protein"/>
</dbReference>
<dbReference type="GO" id="GO:0005783">
    <property type="term" value="C:endoplasmic reticulum"/>
    <property type="evidence" value="ECO:0000314"/>
    <property type="project" value="SGD"/>
</dbReference>
<dbReference type="GO" id="GO:0005789">
    <property type="term" value="C:endoplasmic reticulum membrane"/>
    <property type="evidence" value="ECO:0000314"/>
    <property type="project" value="SGD"/>
</dbReference>
<dbReference type="GO" id="GO:0005811">
    <property type="term" value="C:lipid droplet"/>
    <property type="evidence" value="ECO:0000314"/>
    <property type="project" value="SGD"/>
</dbReference>
<dbReference type="GO" id="GO:0005741">
    <property type="term" value="C:mitochondrial outer membrane"/>
    <property type="evidence" value="ECO:0007005"/>
    <property type="project" value="SGD"/>
</dbReference>
<dbReference type="GO" id="GO:0000253">
    <property type="term" value="F:3-beta-hydroxysteroid 3-dehydrogenase (NADP+) activity"/>
    <property type="evidence" value="ECO:0000315"/>
    <property type="project" value="SGD"/>
</dbReference>
<dbReference type="GO" id="GO:0006696">
    <property type="term" value="P:ergosterol biosynthetic process"/>
    <property type="evidence" value="ECO:0000315"/>
    <property type="project" value="SGD"/>
</dbReference>
<dbReference type="CDD" id="cd08941">
    <property type="entry name" value="3KS_SDR_c"/>
    <property type="match status" value="1"/>
</dbReference>
<dbReference type="FunFam" id="3.40.50.720:FF:000525">
    <property type="entry name" value="3-keto-steroid reductase"/>
    <property type="match status" value="1"/>
</dbReference>
<dbReference type="Gene3D" id="3.40.50.720">
    <property type="entry name" value="NAD(P)-binding Rossmann-like Domain"/>
    <property type="match status" value="1"/>
</dbReference>
<dbReference type="InterPro" id="IPR051593">
    <property type="entry name" value="Ergosterol_Biosynth_ERG27"/>
</dbReference>
<dbReference type="InterPro" id="IPR042829">
    <property type="entry name" value="HSD17B7/Erg27"/>
</dbReference>
<dbReference type="InterPro" id="IPR036291">
    <property type="entry name" value="NAD(P)-bd_dom_sf"/>
</dbReference>
<dbReference type="InterPro" id="IPR038765">
    <property type="entry name" value="Papain-like_cys_pep_sf"/>
</dbReference>
<dbReference type="InterPro" id="IPR002347">
    <property type="entry name" value="SDR_fam"/>
</dbReference>
<dbReference type="PANTHER" id="PTHR43647:SF1">
    <property type="entry name" value="3-KETO-STEROID REDUCTASE ERG27"/>
    <property type="match status" value="1"/>
</dbReference>
<dbReference type="PANTHER" id="PTHR43647">
    <property type="entry name" value="DEHYDROGENASE"/>
    <property type="match status" value="1"/>
</dbReference>
<dbReference type="Pfam" id="PF00106">
    <property type="entry name" value="adh_short"/>
    <property type="match status" value="1"/>
</dbReference>
<dbReference type="SUPFAM" id="SSF54001">
    <property type="entry name" value="Cysteine proteinases"/>
    <property type="match status" value="1"/>
</dbReference>
<dbReference type="SUPFAM" id="SSF51735">
    <property type="entry name" value="NAD(P)-binding Rossmann-fold domains"/>
    <property type="match status" value="1"/>
</dbReference>
<organism>
    <name type="scientific">Saccharomyces cerevisiae (strain ATCC 204508 / S288c)</name>
    <name type="common">Baker's yeast</name>
    <dbReference type="NCBI Taxonomy" id="559292"/>
    <lineage>
        <taxon>Eukaryota</taxon>
        <taxon>Fungi</taxon>
        <taxon>Dikarya</taxon>
        <taxon>Ascomycota</taxon>
        <taxon>Saccharomycotina</taxon>
        <taxon>Saccharomycetes</taxon>
        <taxon>Saccharomycetales</taxon>
        <taxon>Saccharomycetaceae</taxon>
        <taxon>Saccharomyces</taxon>
    </lineage>
</organism>
<proteinExistence type="evidence at protein level"/>
<gene>
    <name evidence="8" type="primary">ERG27</name>
    <name type="ordered locus">YLR100W</name>
</gene>
<evidence type="ECO:0000250" key="1">
    <source>
        <dbReference type="UniProtKB" id="L0E2Z4"/>
    </source>
</evidence>
<evidence type="ECO:0000250" key="2">
    <source>
        <dbReference type="UniProtKB" id="O93868"/>
    </source>
</evidence>
<evidence type="ECO:0000269" key="3">
    <source>
    </source>
</evidence>
<evidence type="ECO:0000269" key="4">
    <source>
    </source>
</evidence>
<evidence type="ECO:0000269" key="5">
    <source>
    </source>
</evidence>
<evidence type="ECO:0000269" key="6">
    <source>
    </source>
</evidence>
<evidence type="ECO:0000269" key="7">
    <source>
    </source>
</evidence>
<evidence type="ECO:0000303" key="8">
    <source>
    </source>
</evidence>
<evidence type="ECO:0000303" key="9">
    <source>
    </source>
</evidence>
<evidence type="ECO:0000305" key="10"/>
<evidence type="ECO:0007744" key="11">
    <source>
    </source>
</evidence>
<keyword id="KW-0256">Endoplasmic reticulum</keyword>
<keyword id="KW-0444">Lipid biosynthesis</keyword>
<keyword id="KW-0551">Lipid droplet</keyword>
<keyword id="KW-0443">Lipid metabolism</keyword>
<keyword id="KW-0472">Membrane</keyword>
<keyword id="KW-0521">NADP</keyword>
<keyword id="KW-0560">Oxidoreductase</keyword>
<keyword id="KW-0597">Phosphoprotein</keyword>
<keyword id="KW-1185">Reference proteome</keyword>
<keyword id="KW-0752">Steroid biosynthesis</keyword>
<accession>Q12452</accession>
<accession>D6VYA1</accession>